<name>DCL1_CRYPA</name>
<reference key="1">
    <citation type="journal article" date="2007" name="Proc. Natl. Acad. Sci. U.S.A.">
        <title>Evidence that RNA silencing functions as an antiviral defense mechanism in fungi.</title>
        <authorList>
            <person name="Segers G.C."/>
            <person name="Zhang X."/>
            <person name="Deng F."/>
            <person name="Sun Q."/>
            <person name="Nuss D.L."/>
        </authorList>
    </citation>
    <scope>NUCLEOTIDE SEQUENCE [GENOMIC DNA]</scope>
    <scope>FUNCTION</scope>
</reference>
<gene>
    <name type="primary">DCL-1</name>
</gene>
<feature type="chain" id="PRO_0000306780" description="Dicer-like protein 1">
    <location>
        <begin position="1"/>
        <end position="1548"/>
    </location>
</feature>
<feature type="domain" description="Helicase ATP-binding" evidence="5">
    <location>
        <begin position="106"/>
        <end position="289"/>
    </location>
</feature>
<feature type="domain" description="Helicase C-terminal" evidence="6">
    <location>
        <begin position="428"/>
        <end position="589"/>
    </location>
</feature>
<feature type="domain" description="Dicer dsRNA-binding fold" evidence="7">
    <location>
        <begin position="624"/>
        <end position="718"/>
    </location>
</feature>
<feature type="domain" description="PAZ" evidence="3">
    <location>
        <begin position="871"/>
        <end position="1006"/>
    </location>
</feature>
<feature type="domain" description="RNase III 1" evidence="4">
    <location>
        <begin position="1051"/>
        <end position="1197"/>
    </location>
</feature>
<feature type="domain" description="RNase III 2" evidence="4">
    <location>
        <begin position="1248"/>
        <end position="1411"/>
    </location>
</feature>
<feature type="domain" description="DRBM">
    <location>
        <begin position="1445"/>
        <end position="1518"/>
    </location>
</feature>
<feature type="region of interest" description="Disordered" evidence="8">
    <location>
        <begin position="1"/>
        <end position="48"/>
    </location>
</feature>
<feature type="short sequence motif" description="DEAH box">
    <location>
        <begin position="232"/>
        <end position="235"/>
    </location>
</feature>
<feature type="compositionally biased region" description="Basic and acidic residues" evidence="8">
    <location>
        <begin position="1"/>
        <end position="41"/>
    </location>
</feature>
<feature type="binding site" evidence="5">
    <location>
        <begin position="119"/>
        <end position="126"/>
    </location>
    <ligand>
        <name>ATP</name>
        <dbReference type="ChEBI" id="CHEBI:30616"/>
    </ligand>
</feature>
<feature type="binding site" evidence="1">
    <location>
        <position position="1288"/>
    </location>
    <ligand>
        <name>Mg(2+)</name>
        <dbReference type="ChEBI" id="CHEBI:18420"/>
    </ligand>
</feature>
<feature type="binding site" evidence="1">
    <location>
        <position position="1397"/>
    </location>
    <ligand>
        <name>Mg(2+)</name>
        <dbReference type="ChEBI" id="CHEBI:18420"/>
    </ligand>
</feature>
<feature type="binding site" evidence="1">
    <location>
        <position position="1400"/>
    </location>
    <ligand>
        <name>Mg(2+)</name>
        <dbReference type="ChEBI" id="CHEBI:18420"/>
    </ligand>
</feature>
<feature type="binding site" evidence="2">
    <location>
        <position position="1457"/>
    </location>
    <ligand>
        <name>Zn(2+)</name>
        <dbReference type="ChEBI" id="CHEBI:29105"/>
    </ligand>
</feature>
<feature type="binding site" evidence="2">
    <location>
        <position position="1489"/>
    </location>
    <ligand>
        <name>Zn(2+)</name>
        <dbReference type="ChEBI" id="CHEBI:29105"/>
    </ligand>
</feature>
<feature type="binding site" evidence="2">
    <location>
        <position position="1530"/>
    </location>
    <ligand>
        <name>Zn(2+)</name>
        <dbReference type="ChEBI" id="CHEBI:29105"/>
    </ligand>
</feature>
<feature type="binding site" evidence="2">
    <location>
        <position position="1532"/>
    </location>
    <ligand>
        <name>Zn(2+)</name>
        <dbReference type="ChEBI" id="CHEBI:29105"/>
    </ligand>
</feature>
<feature type="site" description="Important for activity" evidence="1">
    <location>
        <position position="1393"/>
    </location>
</feature>
<protein>
    <recommendedName>
        <fullName>Dicer-like protein 1</fullName>
    </recommendedName>
    <domain>
        <recommendedName>
            <fullName>Endoribonuclease DCL-1</fullName>
            <ecNumber>3.1.26.-</ecNumber>
        </recommendedName>
    </domain>
    <domain>
        <recommendedName>
            <fullName>ATP-dependent helicase DCL-1</fullName>
            <ecNumber>3.6.4.-</ecNumber>
        </recommendedName>
    </domain>
</protein>
<evidence type="ECO:0000250" key="1"/>
<evidence type="ECO:0000250" key="2">
    <source>
        <dbReference type="UniProtKB" id="Q09884"/>
    </source>
</evidence>
<evidence type="ECO:0000255" key="3">
    <source>
        <dbReference type="PROSITE-ProRule" id="PRU00142"/>
    </source>
</evidence>
<evidence type="ECO:0000255" key="4">
    <source>
        <dbReference type="PROSITE-ProRule" id="PRU00177"/>
    </source>
</evidence>
<evidence type="ECO:0000255" key="5">
    <source>
        <dbReference type="PROSITE-ProRule" id="PRU00541"/>
    </source>
</evidence>
<evidence type="ECO:0000255" key="6">
    <source>
        <dbReference type="PROSITE-ProRule" id="PRU00542"/>
    </source>
</evidence>
<evidence type="ECO:0000255" key="7">
    <source>
        <dbReference type="PROSITE-ProRule" id="PRU00657"/>
    </source>
</evidence>
<evidence type="ECO:0000256" key="8">
    <source>
        <dbReference type="SAM" id="MobiDB-lite"/>
    </source>
</evidence>
<evidence type="ECO:0000269" key="9">
    <source>
    </source>
</evidence>
<sequence>MGDPAAHEMADLERGFSSEDDAEYRSGDDEASKFVENEPSKRGKISQKKKIEQTNFAKWMDTNQKSLTRKAVKQSVNQDNSLAYMIRSWEGGEKIITSPRDYQMELFERAKQQNTIAVLDTGSGKTLIAALLLDHTVNQELEDRAKGLPRRIAFFLVEKVALAFQQHAVLECNLAHSVAVFSGESIKNTWTKGFWETQLADHEVIVCTAEILNQCLQYAYIRIDQINLLVFDEAHHTKKNHPYARIIKDYYASGKDRGLRLPRIFGMTASPVDALIDVRQAAIELEGLLHSRIATTADPDALRRAVGRPKKEIIYKYNPLVKPIQTMLTFKLRPLIANNKQFSKAFAFSEAAARELGTWFVDRMWQLFLEDEELLKLEAKTERSLSKDMAAPEVVEKHRNAVRSARELIRSHEFPKPEPGLLSSKLKTLSKLLEEYFTDSSIRCIVFVERRWTAKLLTDFFESHAAEIPGLKVGSLMGANAEGGSSQTSFREQIRTILSFKKGNTNCIFATSVAEEGLDIPDCNLIIRFDICKTMIQYIQSRGRARQADSTYIHLIEGGNGDHRRIMHQNAENEKLLRRFCNTQPEDRLLKGSDYDMDFFLRQERNQRQYTIKSTGARLTYKNSLPILQAFLNTLRNQDDYAEGMDLVADYSILSVQGGFICEVMMPPLSPVTSAIGKVYSTKQVAKCSAAFELCFQLIQKKFLDDHLRSKFVEKRHVMANARLAVSSKNKAKYDMRLKPQIWAELGVPEKLYATVLILSKPSALERPSRPLFILTRTPLPQLKPFLLFLGPVEQEMTSDLVCQVLNCPITPTEEDLQLLTKFTLKIFVDIFNKKYAANAQALPYFFAPTNKDHVFLFSNLQDPRNAVDWPLLRHVADRDAEAYTGDEPEEFFQDKYIVDPHDGARRFWLQGIRKDLTCTSPVPADVEHQPTHRQWKRREVPHDILHWSLTAWKATREAHENKWKENQPVVVGKYATLRRNFLADINETSKNPFCYFVLEPMRISPLPVDVVAMAYLLPSIIHRIEQNLIALDACRLLQLDIHPDLALEALTKDSDNQGEDERMDSIQAFEPVNFQPGMGANYERLELLGDSFLKMATTIAVFTLIPNKDEFDYHCERMVMICNQNLFGVAKSDDLKLHEYIRSKSFERGTWYPVLKLEFGKTHLKTLKQMDEHRLADKSIADVCEALIGAAYMTTRKHDDYDLAVRAVTRLVNHKQHPMTKWDDYHAAYVMPGWQTMPANAAELDMAQKIHEATGYQFKHPRVLRSAFRHPSRPYVFDKVPHYQRLEFLGDALFDMACVDYLFHIAPDEGPQWLTEHKMAMVSNQFLGCLAVSLGFHKFILHHHASIGSQIHEYVTEITEARRAAEDAAEAAGKPRSAYSRDYWVEAPQPPKCIPDVLEAYVGAIFVDSKYDYSVVQQFFHAHVLPFFASMRMYDTFANKHPVTFFTQYVFETFGCHAYGLHAEEMPVKDDTGLVTGKTQVVAGILLHGQVVEGAVRDSGRYAKIAAARKALDKLRSMTRQEFLDAYKCDCKPGEAAEDISESATAI</sequence>
<comment type="function">
    <text evidence="1 9">Dicer-like endonuclease involved in cleaving double-stranded RNA in the RNA interference (RNAi) pathway. Produces 21 to 25 bp dsRNAs (siRNAs) which target the selective destruction of homologous RNAs leading to sequence-specific suppression of gene expression, called post-transcriptional gene silencing (PTGS). Part of a broad host defense response against viral infection and transposons (By similarity).</text>
</comment>
<comment type="cofactor">
    <cofactor evidence="1">
        <name>Mg(2+)</name>
        <dbReference type="ChEBI" id="CHEBI:18420"/>
    </cofactor>
    <cofactor evidence="1">
        <name>Mn(2+)</name>
        <dbReference type="ChEBI" id="CHEBI:29035"/>
    </cofactor>
</comment>
<comment type="similarity">
    <text evidence="7">Belongs to the helicase family. Dicer subfamily.</text>
</comment>
<organism>
    <name type="scientific">Cryphonectria parasitica</name>
    <name type="common">Chestnut blight fungus</name>
    <name type="synonym">Endothia parasitica</name>
    <dbReference type="NCBI Taxonomy" id="5116"/>
    <lineage>
        <taxon>Eukaryota</taxon>
        <taxon>Fungi</taxon>
        <taxon>Dikarya</taxon>
        <taxon>Ascomycota</taxon>
        <taxon>Pezizomycotina</taxon>
        <taxon>Sordariomycetes</taxon>
        <taxon>Sordariomycetidae</taxon>
        <taxon>Diaporthales</taxon>
        <taxon>Cryphonectriaceae</taxon>
        <taxon>Cryphonectria-Endothia species complex</taxon>
        <taxon>Cryphonectria</taxon>
    </lineage>
</organism>
<accession>Q2VF19</accession>
<proteinExistence type="inferred from homology"/>
<dbReference type="EC" id="3.1.26.-"/>
<dbReference type="EC" id="3.6.4.-"/>
<dbReference type="EMBL" id="DQ186989">
    <property type="protein sequence ID" value="ABB00356.1"/>
    <property type="molecule type" value="Genomic_DNA"/>
</dbReference>
<dbReference type="SMR" id="Q2VF19"/>
<dbReference type="OMA" id="TRKNHAY"/>
<dbReference type="GO" id="GO:0005737">
    <property type="term" value="C:cytoplasm"/>
    <property type="evidence" value="ECO:0007669"/>
    <property type="project" value="TreeGrafter"/>
</dbReference>
<dbReference type="GO" id="GO:0005634">
    <property type="term" value="C:nucleus"/>
    <property type="evidence" value="ECO:0007669"/>
    <property type="project" value="TreeGrafter"/>
</dbReference>
<dbReference type="GO" id="GO:0005524">
    <property type="term" value="F:ATP binding"/>
    <property type="evidence" value="ECO:0007669"/>
    <property type="project" value="UniProtKB-KW"/>
</dbReference>
<dbReference type="GO" id="GO:0003677">
    <property type="term" value="F:DNA binding"/>
    <property type="evidence" value="ECO:0007669"/>
    <property type="project" value="InterPro"/>
</dbReference>
<dbReference type="GO" id="GO:0004386">
    <property type="term" value="F:helicase activity"/>
    <property type="evidence" value="ECO:0007669"/>
    <property type="project" value="UniProtKB-KW"/>
</dbReference>
<dbReference type="GO" id="GO:0046872">
    <property type="term" value="F:metal ion binding"/>
    <property type="evidence" value="ECO:0007669"/>
    <property type="project" value="UniProtKB-KW"/>
</dbReference>
<dbReference type="GO" id="GO:0004525">
    <property type="term" value="F:ribonuclease III activity"/>
    <property type="evidence" value="ECO:0007669"/>
    <property type="project" value="InterPro"/>
</dbReference>
<dbReference type="GO" id="GO:0003723">
    <property type="term" value="F:RNA binding"/>
    <property type="evidence" value="ECO:0007669"/>
    <property type="project" value="UniProtKB-KW"/>
</dbReference>
<dbReference type="GO" id="GO:0051607">
    <property type="term" value="P:defense response to virus"/>
    <property type="evidence" value="ECO:0007669"/>
    <property type="project" value="UniProtKB-KW"/>
</dbReference>
<dbReference type="GO" id="GO:0050688">
    <property type="term" value="P:regulation of defense response to virus"/>
    <property type="evidence" value="ECO:0007669"/>
    <property type="project" value="UniProtKB-KW"/>
</dbReference>
<dbReference type="GO" id="GO:0030422">
    <property type="term" value="P:siRNA processing"/>
    <property type="evidence" value="ECO:0007669"/>
    <property type="project" value="TreeGrafter"/>
</dbReference>
<dbReference type="CDD" id="cd18034">
    <property type="entry name" value="DEXHc_dicer"/>
    <property type="match status" value="1"/>
</dbReference>
<dbReference type="CDD" id="cd00593">
    <property type="entry name" value="RIBOc"/>
    <property type="match status" value="2"/>
</dbReference>
<dbReference type="CDD" id="cd18802">
    <property type="entry name" value="SF2_C_dicer"/>
    <property type="match status" value="1"/>
</dbReference>
<dbReference type="Gene3D" id="3.30.160.380">
    <property type="entry name" value="Dicer dimerisation domain"/>
    <property type="match status" value="1"/>
</dbReference>
<dbReference type="Gene3D" id="3.40.50.300">
    <property type="entry name" value="P-loop containing nucleotide triphosphate hydrolases"/>
    <property type="match status" value="2"/>
</dbReference>
<dbReference type="Gene3D" id="1.10.1520.10">
    <property type="entry name" value="Ribonuclease III domain"/>
    <property type="match status" value="2"/>
</dbReference>
<dbReference type="InterPro" id="IPR038248">
    <property type="entry name" value="Dicer_dimer_sf"/>
</dbReference>
<dbReference type="InterPro" id="IPR005034">
    <property type="entry name" value="Dicer_dimerisation_dom"/>
</dbReference>
<dbReference type="InterPro" id="IPR056755">
    <property type="entry name" value="DSRM_2"/>
</dbReference>
<dbReference type="InterPro" id="IPR006935">
    <property type="entry name" value="Helicase/UvrB_N"/>
</dbReference>
<dbReference type="InterPro" id="IPR014001">
    <property type="entry name" value="Helicase_ATP-bd"/>
</dbReference>
<dbReference type="InterPro" id="IPR001650">
    <property type="entry name" value="Helicase_C-like"/>
</dbReference>
<dbReference type="InterPro" id="IPR027417">
    <property type="entry name" value="P-loop_NTPase"/>
</dbReference>
<dbReference type="InterPro" id="IPR003100">
    <property type="entry name" value="PAZ_dom"/>
</dbReference>
<dbReference type="InterPro" id="IPR000999">
    <property type="entry name" value="RNase_III_dom"/>
</dbReference>
<dbReference type="InterPro" id="IPR036389">
    <property type="entry name" value="RNase_III_sf"/>
</dbReference>
<dbReference type="PANTHER" id="PTHR14950:SF62">
    <property type="entry name" value="DICER-LIKE PROTEIN 1"/>
    <property type="match status" value="1"/>
</dbReference>
<dbReference type="PANTHER" id="PTHR14950">
    <property type="entry name" value="DICER-RELATED"/>
    <property type="match status" value="1"/>
</dbReference>
<dbReference type="Pfam" id="PF03368">
    <property type="entry name" value="Dicer_dimer"/>
    <property type="match status" value="1"/>
</dbReference>
<dbReference type="Pfam" id="PF24995">
    <property type="entry name" value="DSRM_2"/>
    <property type="match status" value="1"/>
</dbReference>
<dbReference type="Pfam" id="PF00271">
    <property type="entry name" value="Helicase_C"/>
    <property type="match status" value="1"/>
</dbReference>
<dbReference type="Pfam" id="PF04851">
    <property type="entry name" value="ResIII"/>
    <property type="match status" value="1"/>
</dbReference>
<dbReference type="Pfam" id="PF00636">
    <property type="entry name" value="Ribonuclease_3"/>
    <property type="match status" value="2"/>
</dbReference>
<dbReference type="SMART" id="SM00487">
    <property type="entry name" value="DEXDc"/>
    <property type="match status" value="1"/>
</dbReference>
<dbReference type="SMART" id="SM00490">
    <property type="entry name" value="HELICc"/>
    <property type="match status" value="1"/>
</dbReference>
<dbReference type="SMART" id="SM00535">
    <property type="entry name" value="RIBOc"/>
    <property type="match status" value="2"/>
</dbReference>
<dbReference type="SUPFAM" id="SSF52540">
    <property type="entry name" value="P-loop containing nucleoside triphosphate hydrolases"/>
    <property type="match status" value="1"/>
</dbReference>
<dbReference type="SUPFAM" id="SSF69065">
    <property type="entry name" value="RNase III domain-like"/>
    <property type="match status" value="2"/>
</dbReference>
<dbReference type="PROSITE" id="PS51327">
    <property type="entry name" value="DICER_DSRBF"/>
    <property type="match status" value="1"/>
</dbReference>
<dbReference type="PROSITE" id="PS51192">
    <property type="entry name" value="HELICASE_ATP_BIND_1"/>
    <property type="match status" value="1"/>
</dbReference>
<dbReference type="PROSITE" id="PS51194">
    <property type="entry name" value="HELICASE_CTER"/>
    <property type="match status" value="1"/>
</dbReference>
<dbReference type="PROSITE" id="PS50821">
    <property type="entry name" value="PAZ"/>
    <property type="match status" value="1"/>
</dbReference>
<dbReference type="PROSITE" id="PS00517">
    <property type="entry name" value="RNASE_3_1"/>
    <property type="match status" value="1"/>
</dbReference>
<dbReference type="PROSITE" id="PS50142">
    <property type="entry name" value="RNASE_3_2"/>
    <property type="match status" value="2"/>
</dbReference>
<keyword id="KW-0051">Antiviral defense</keyword>
<keyword id="KW-0930">Antiviral protein</keyword>
<keyword id="KW-0067">ATP-binding</keyword>
<keyword id="KW-0347">Helicase</keyword>
<keyword id="KW-0378">Hydrolase</keyword>
<keyword id="KW-0460">Magnesium</keyword>
<keyword id="KW-0464">Manganese</keyword>
<keyword id="KW-0479">Metal-binding</keyword>
<keyword id="KW-0547">Nucleotide-binding</keyword>
<keyword id="KW-0677">Repeat</keyword>
<keyword id="KW-0694">RNA-binding</keyword>
<keyword id="KW-0862">Zinc</keyword>